<sequence length="317" mass="35303">MVCPNSNPVVEKVCELYEQISRLENLSPSKDVNVLFTDLVHTCMPPNPIDVSKLCQKIQEIRSHLIKLCGQAEGLLESHFSKILSSYENPLQHLHIFPYFDNYIKLSLLEYNILTKNTTNIPKKIAFIGSGPLPLTSLVLATKHLKTTCFHNYDIDVDANFMASALVAADPDMSSRMTFHTADVMDVTCALKDYDVVFLAALVGMDKEDKVKVVDHLAKYMSPGATLMLRSAHGARAFLYPVLDPRDLRGFEVLSVYHPTDEVINSVIIARKLPVPSVPLLDGLGAYVLPSKCACAEIHAFNPLNKMNLVEEFALEE</sequence>
<protein>
    <recommendedName>
        <fullName>Nicotianamine synthase</fullName>
        <ecNumber>2.5.1.43</ecNumber>
    </recommendedName>
    <alternativeName>
        <fullName>Chloronerva</fullName>
    </alternativeName>
    <alternativeName>
        <fullName>S-adenosyl-L-methionine:S-adenosyl-L-methionine:S-adenosyl-methionine 3-amino-3-carboxypropyltransferase</fullName>
    </alternativeName>
</protein>
<comment type="function">
    <text evidence="1">Synthesizes nicotianamine, a polyamine that serves as a sensor for the physiological iron status within the plant, and/or might be involved in the transport of iron.</text>
</comment>
<comment type="catalytic activity">
    <reaction>
        <text>3 S-adenosyl-L-methionine = nicotianamine + 3 S-methyl-5'-thioadenosine + 3 H(+)</text>
        <dbReference type="Rhea" id="RHEA:16481"/>
        <dbReference type="ChEBI" id="CHEBI:15378"/>
        <dbReference type="ChEBI" id="CHEBI:17509"/>
        <dbReference type="ChEBI" id="CHEBI:58249"/>
        <dbReference type="ChEBI" id="CHEBI:59789"/>
        <dbReference type="EC" id="2.5.1.43"/>
    </reaction>
</comment>
<comment type="subunit">
    <text>Homomultimer.</text>
</comment>
<comment type="tissue specificity">
    <text>Leaves and roots.</text>
</comment>
<comment type="induction">
    <text>Expression independent of the iron status.</text>
</comment>
<comment type="similarity">
    <text evidence="2">Belongs to the nicotianamine synthase (NAS)-like family.</text>
</comment>
<evidence type="ECO:0000269" key="1">
    <source>
    </source>
</evidence>
<evidence type="ECO:0000305" key="2"/>
<feature type="chain" id="PRO_0000212713" description="Nicotianamine synthase">
    <location>
        <begin position="1"/>
        <end position="317"/>
    </location>
</feature>
<feature type="sequence variant" description="In chloronerva; has no activity." evidence="1">
    <original>F</original>
    <variation>S</variation>
    <location>
        <position position="238"/>
    </location>
</feature>
<proteinExistence type="evidence at transcript level"/>
<keyword id="KW-1185">Reference proteome</keyword>
<keyword id="KW-0949">S-adenosyl-L-methionine</keyword>
<keyword id="KW-0808">Transferase</keyword>
<gene>
    <name type="primary">CHLN</name>
    <name type="synonym">CLN</name>
</gene>
<name>NAS_SOLLC</name>
<reference key="1">
    <citation type="journal article" date="1999" name="Proc. Natl. Acad. Sci. U.S.A.">
        <title>Map-based cloning of chloronerva, a gene involved in iron uptake of higher plants encoding nicotianamine synthase.</title>
        <authorList>
            <person name="Ling H.-Q."/>
            <person name="Koch G."/>
            <person name="Baeumlein H."/>
            <person name="Ganal M.W."/>
        </authorList>
    </citation>
    <scope>NUCLEOTIDE SEQUENCE [GENOMIC DNA]</scope>
    <scope>FUNCTION</scope>
    <scope>VARIANT CHLORONERVA SER-238</scope>
    <source>
        <strain>cv. Bonner Beste</strain>
        <strain>cv. Moneymaker</strain>
    </source>
</reference>
<organism>
    <name type="scientific">Solanum lycopersicum</name>
    <name type="common">Tomato</name>
    <name type="synonym">Lycopersicon esculentum</name>
    <dbReference type="NCBI Taxonomy" id="4081"/>
    <lineage>
        <taxon>Eukaryota</taxon>
        <taxon>Viridiplantae</taxon>
        <taxon>Streptophyta</taxon>
        <taxon>Embryophyta</taxon>
        <taxon>Tracheophyta</taxon>
        <taxon>Spermatophyta</taxon>
        <taxon>Magnoliopsida</taxon>
        <taxon>eudicotyledons</taxon>
        <taxon>Gunneridae</taxon>
        <taxon>Pentapetalae</taxon>
        <taxon>asterids</taxon>
        <taxon>lamiids</taxon>
        <taxon>Solanales</taxon>
        <taxon>Solanaceae</taxon>
        <taxon>Solanoideae</taxon>
        <taxon>Solaneae</taxon>
        <taxon>Solanum</taxon>
        <taxon>Solanum subgen. Lycopersicon</taxon>
    </lineage>
</organism>
<dbReference type="EC" id="2.5.1.43"/>
<dbReference type="EMBL" id="AJ242045">
    <property type="protein sequence ID" value="CAB42052.1"/>
    <property type="molecule type" value="Genomic_DNA"/>
</dbReference>
<dbReference type="RefSeq" id="NP_001296307.1">
    <property type="nucleotide sequence ID" value="NM_001309378.1"/>
</dbReference>
<dbReference type="SMR" id="Q9XGI7"/>
<dbReference type="FunCoup" id="Q9XGI7">
    <property type="interactions" value="96"/>
</dbReference>
<dbReference type="STRING" id="4081.Q9XGI7"/>
<dbReference type="PaxDb" id="4081-Solyc01g100490.2.1"/>
<dbReference type="EnsemblPlants" id="Solyc01g100490.3.1">
    <property type="protein sequence ID" value="Solyc01g100490.3.1.1"/>
    <property type="gene ID" value="Solyc01g100490.3"/>
</dbReference>
<dbReference type="GeneID" id="101248619"/>
<dbReference type="Gramene" id="Solyc01g100490.3.1">
    <property type="protein sequence ID" value="Solyc01g100490.3.1.1"/>
    <property type="gene ID" value="Solyc01g100490.3"/>
</dbReference>
<dbReference type="KEGG" id="sly:101248619"/>
<dbReference type="eggNOG" id="ENOG502QTU6">
    <property type="taxonomic scope" value="Eukaryota"/>
</dbReference>
<dbReference type="HOGENOM" id="CLU_031919_1_1_1"/>
<dbReference type="InParanoid" id="Q9XGI7"/>
<dbReference type="OMA" id="NIDMSPT"/>
<dbReference type="OrthoDB" id="1858069at2759"/>
<dbReference type="PhylomeDB" id="Q9XGI7"/>
<dbReference type="BioCyc" id="MetaCyc:MONOMER-14045"/>
<dbReference type="BRENDA" id="2.5.1.43">
    <property type="organism ID" value="3101"/>
</dbReference>
<dbReference type="Proteomes" id="UP000004994">
    <property type="component" value="Chromosome 1"/>
</dbReference>
<dbReference type="GO" id="GO:0030410">
    <property type="term" value="F:nicotianamine synthase activity"/>
    <property type="evidence" value="ECO:0007669"/>
    <property type="project" value="UniProtKB-EC"/>
</dbReference>
<dbReference type="GO" id="GO:0030418">
    <property type="term" value="P:nicotianamine biosynthetic process"/>
    <property type="evidence" value="ECO:0007669"/>
    <property type="project" value="InterPro"/>
</dbReference>
<dbReference type="Gene3D" id="3.40.50.150">
    <property type="entry name" value="Vaccinia Virus protein VP39"/>
    <property type="match status" value="1"/>
</dbReference>
<dbReference type="InterPro" id="IPR004298">
    <property type="entry name" value="Nicotian_synth"/>
</dbReference>
<dbReference type="InterPro" id="IPR029063">
    <property type="entry name" value="SAM-dependent_MTases_sf"/>
</dbReference>
<dbReference type="PANTHER" id="PTHR32266">
    <property type="entry name" value="NICOTIANAMINE SYNTHASE 3"/>
    <property type="match status" value="1"/>
</dbReference>
<dbReference type="PANTHER" id="PTHR32266:SF12">
    <property type="entry name" value="NICOTIANAMINE SYNTHASE 3"/>
    <property type="match status" value="1"/>
</dbReference>
<dbReference type="Pfam" id="PF03059">
    <property type="entry name" value="NAS"/>
    <property type="match status" value="1"/>
</dbReference>
<dbReference type="SUPFAM" id="SSF53335">
    <property type="entry name" value="S-adenosyl-L-methionine-dependent methyltransferases"/>
    <property type="match status" value="1"/>
</dbReference>
<dbReference type="PROSITE" id="PS51142">
    <property type="entry name" value="NAS"/>
    <property type="match status" value="1"/>
</dbReference>
<accession>Q9XGI7</accession>